<protein>
    <recommendedName>
        <fullName>Tegument protein UL21</fullName>
    </recommendedName>
</protein>
<feature type="chain" id="PRO_0000115977" description="Tegument protein UL21">
    <location>
        <begin position="1"/>
        <end position="523"/>
    </location>
</feature>
<feature type="region of interest" description="Disordered" evidence="2">
    <location>
        <begin position="340"/>
        <end position="364"/>
    </location>
</feature>
<feature type="compositionally biased region" description="Gly residues" evidence="2">
    <location>
        <begin position="353"/>
        <end position="362"/>
    </location>
</feature>
<accession>Q00703</accession>
<dbReference type="EMBL" id="M95285">
    <property type="protein sequence ID" value="AAA47474.1"/>
    <property type="molecule type" value="Genomic_DNA"/>
</dbReference>
<dbReference type="PIR" id="A44195">
    <property type="entry name" value="A44195"/>
</dbReference>
<dbReference type="SMR" id="Q00703"/>
<dbReference type="GO" id="GO:0030430">
    <property type="term" value="C:host cell cytoplasm"/>
    <property type="evidence" value="ECO:0007669"/>
    <property type="project" value="UniProtKB-SubCell"/>
</dbReference>
<dbReference type="GO" id="GO:0042025">
    <property type="term" value="C:host cell nucleus"/>
    <property type="evidence" value="ECO:0007669"/>
    <property type="project" value="UniProtKB-SubCell"/>
</dbReference>
<dbReference type="GO" id="GO:0019033">
    <property type="term" value="C:viral tegument"/>
    <property type="evidence" value="ECO:0007669"/>
    <property type="project" value="UniProtKB-SubCell"/>
</dbReference>
<dbReference type="InterPro" id="IPR004936">
    <property type="entry name" value="Herpes_UL21"/>
</dbReference>
<dbReference type="Pfam" id="PF03252">
    <property type="entry name" value="Herpes_UL21"/>
    <property type="match status" value="1"/>
</dbReference>
<evidence type="ECO:0000250" key="1"/>
<evidence type="ECO:0000256" key="2">
    <source>
        <dbReference type="SAM" id="MobiDB-lite"/>
    </source>
</evidence>
<evidence type="ECO:0000269" key="3">
    <source>
    </source>
</evidence>
<evidence type="ECO:0000269" key="4">
    <source>
    </source>
</evidence>
<evidence type="ECO:0000305" key="5"/>
<comment type="function">
    <text evidence="3 4">May participate in DNA packaging/capsid maturation events. Promotes efficient incorporation of tegument proteins UL46, UL49, and US3 into virions. May also play a role in capsid transport to the trans-Golgi network (TGN).</text>
</comment>
<comment type="subunit">
    <text evidence="1">Interacts (via C-terminus) with UL16.</text>
</comment>
<comment type="subcellular location">
    <subcellularLocation>
        <location evidence="1">Virion tegument</location>
    </subcellularLocation>
    <subcellularLocation>
        <location evidence="1">Host cytoplasm</location>
    </subcellularLocation>
    <subcellularLocation>
        <location evidence="1">Host nucleus</location>
    </subcellularLocation>
</comment>
<comment type="similarity">
    <text evidence="5">Belongs to the alphaherpesvirinae UL21 protein family.</text>
</comment>
<organism>
    <name type="scientific">Suid herpesvirus 1 (strain NIA-3)</name>
    <name type="common">SuHV-1</name>
    <name type="synonym">Pseudorabies virus (strain NIA-3)</name>
    <dbReference type="NCBI Taxonomy" id="10349"/>
    <lineage>
        <taxon>Viruses</taxon>
        <taxon>Duplodnaviria</taxon>
        <taxon>Heunggongvirae</taxon>
        <taxon>Peploviricota</taxon>
        <taxon>Herviviricetes</taxon>
        <taxon>Herpesvirales</taxon>
        <taxon>Orthoherpesviridae</taxon>
        <taxon>Alphaherpesvirinae</taxon>
        <taxon>Varicellovirus</taxon>
        <taxon>Varicellovirus suidalpha1</taxon>
        <taxon>Suid herpesvirus 1</taxon>
    </lineage>
</organism>
<keyword id="KW-1035">Host cytoplasm</keyword>
<keyword id="KW-1048">Host nucleus</keyword>
<keyword id="KW-0946">Virion</keyword>
<keyword id="KW-0920">Virion tegument</keyword>
<name>TEG4_SUHVN</name>
<sequence length="523" mass="55020">MEFEYQSTIVHQGVLFYVADGGDRAYFVHGGCIVSVHRRSREIGKFGLTLRGNAPGNRVVANYVRTELARLGRAWAAPQGSDDVFVDALGLLLPLTELDLCGRAELDVYDPYLVECMVSLPASALSLTLVHDRQQDRVLELLAEPAIVHPSSGFVYAVNEACFALVQAYLSELPSSLQVLTEGLFDGIPGVRPPLSGETRPTAVVVKGGRAAPTLSVRPRRYAERALRATVVSDFVQVRYIPATRRIWATRGGSLSLQMLCDLVAGADAILRRAAGASDDASAAVVEAVSAVAADPFFGTGSTSLTGAQRFALYQFILARWHLPSCYAALEGMLDRLDERPGAGAGDDDDGGEGGGGGGHGGSRAASAVAHAVNRVLREATVFGEVMRMLVNAAVVHAPAIADPAGASPPTTKHAREDAATGLELAVMMSDAETNALDADACELVEAAGARVLDGLYAGRGLVAATAPVGRALRPTSAVCAEAALLTAFGDSPAALRGAQYLFQLFRARLTRANISIVLNKNR</sequence>
<organismHost>
    <name type="scientific">Sus scrofa</name>
    <name type="common">Pig</name>
    <dbReference type="NCBI Taxonomy" id="9823"/>
</organismHost>
<reference key="1">
    <citation type="journal article" date="1992" name="J. Virol.">
        <title>The pseudorabies virus homology of the herpes simplex virus UL21 gene product is a capsid protein which is involved in capsid maturation.</title>
        <authorList>
            <person name="Berns A.A."/>
            <person name="Kimman T.T."/>
            <person name="Pol J.J."/>
            <person name="Wagenaar F.F."/>
            <person name="de Wind N.N."/>
        </authorList>
    </citation>
    <scope>NUCLEOTIDE SEQUENCE [GENOMIC DNA]</scope>
</reference>
<reference key="2">
    <citation type="journal article" date="2001" name="Vet. Res.">
        <title>Deletion of the UL21 gene in Pseudorabies virus results in the formation of DNA-deprived capsids: an electron microscopy study.</title>
        <authorList>
            <person name="Wagenaar F."/>
            <person name="Pol J.M."/>
            <person name="de Wind N."/>
            <person name="Kimman T.G."/>
        </authorList>
    </citation>
    <scope>FUNCTION</scope>
</reference>
<reference key="3">
    <citation type="journal article" date="2005" name="J. Virol.">
        <title>Complex formation between the UL16 and UL21 tegument proteins of pseudorabies virus.</title>
        <authorList>
            <person name="Klupp B.G."/>
            <person name="Bottcher S."/>
            <person name="Granzow H."/>
            <person name="Kopp M."/>
            <person name="Mettenleiter T.C."/>
        </authorList>
    </citation>
    <scope>INTERACTION WITH UL16</scope>
</reference>
<reference key="4">
    <citation type="journal article" date="2007" name="J. Virol.">
        <title>Efficient incorporation of tegument proteins pUL46, pUL49, and pUS3 into pseudorabies virus particles depends on the presence of pUL21.</title>
        <authorList>
            <person name="Michael K."/>
            <person name="Klupp B.G."/>
            <person name="Karger A."/>
            <person name="Mettenleiter T.C."/>
        </authorList>
    </citation>
    <scope>FUNCTION</scope>
</reference>
<proteinExistence type="evidence at protein level"/>
<gene>
    <name type="primary">UL21</name>
</gene>